<sequence>MSSPEGSSVTFRRAPATLRRPAIERFARRLQKEVADGAPFDTLITGDAELRRLNRDFRKKDYATDVLSFPSGGPGLGDLAISLGRARAQAREFGHTIEQEISILMLHGVLHLLGHDHEVDRGRMASLEKRWRAKLGLPTGLIERVQS</sequence>
<accession>Q01P09</accession>
<dbReference type="EC" id="3.1.-.-" evidence="1"/>
<dbReference type="EMBL" id="CP000473">
    <property type="protein sequence ID" value="ABJ88611.1"/>
    <property type="molecule type" value="Genomic_DNA"/>
</dbReference>
<dbReference type="SMR" id="Q01P09"/>
<dbReference type="FunCoup" id="Q01P09">
    <property type="interactions" value="263"/>
</dbReference>
<dbReference type="STRING" id="234267.Acid_7712"/>
<dbReference type="KEGG" id="sus:Acid_7712"/>
<dbReference type="eggNOG" id="COG0319">
    <property type="taxonomic scope" value="Bacteria"/>
</dbReference>
<dbReference type="HOGENOM" id="CLU_106710_1_0_0"/>
<dbReference type="InParanoid" id="Q01P09"/>
<dbReference type="OrthoDB" id="9807740at2"/>
<dbReference type="GO" id="GO:0005737">
    <property type="term" value="C:cytoplasm"/>
    <property type="evidence" value="ECO:0007669"/>
    <property type="project" value="UniProtKB-SubCell"/>
</dbReference>
<dbReference type="GO" id="GO:0004222">
    <property type="term" value="F:metalloendopeptidase activity"/>
    <property type="evidence" value="ECO:0007669"/>
    <property type="project" value="InterPro"/>
</dbReference>
<dbReference type="GO" id="GO:0004521">
    <property type="term" value="F:RNA endonuclease activity"/>
    <property type="evidence" value="ECO:0007669"/>
    <property type="project" value="UniProtKB-UniRule"/>
</dbReference>
<dbReference type="GO" id="GO:0008270">
    <property type="term" value="F:zinc ion binding"/>
    <property type="evidence" value="ECO:0007669"/>
    <property type="project" value="UniProtKB-UniRule"/>
</dbReference>
<dbReference type="GO" id="GO:0006364">
    <property type="term" value="P:rRNA processing"/>
    <property type="evidence" value="ECO:0007669"/>
    <property type="project" value="UniProtKB-UniRule"/>
</dbReference>
<dbReference type="Gene3D" id="3.40.390.30">
    <property type="entry name" value="Metalloproteases ('zincins'), catalytic domain"/>
    <property type="match status" value="1"/>
</dbReference>
<dbReference type="HAMAP" id="MF_00009">
    <property type="entry name" value="Endoribonucl_YbeY"/>
    <property type="match status" value="1"/>
</dbReference>
<dbReference type="InterPro" id="IPR023091">
    <property type="entry name" value="MetalPrtase_cat_dom_sf_prd"/>
</dbReference>
<dbReference type="InterPro" id="IPR002036">
    <property type="entry name" value="YbeY"/>
</dbReference>
<dbReference type="InterPro" id="IPR020549">
    <property type="entry name" value="YbeY_CS"/>
</dbReference>
<dbReference type="NCBIfam" id="TIGR00043">
    <property type="entry name" value="rRNA maturation RNase YbeY"/>
    <property type="match status" value="1"/>
</dbReference>
<dbReference type="PANTHER" id="PTHR46986">
    <property type="entry name" value="ENDORIBONUCLEASE YBEY, CHLOROPLASTIC"/>
    <property type="match status" value="1"/>
</dbReference>
<dbReference type="PANTHER" id="PTHR46986:SF1">
    <property type="entry name" value="ENDORIBONUCLEASE YBEY, CHLOROPLASTIC"/>
    <property type="match status" value="1"/>
</dbReference>
<dbReference type="Pfam" id="PF02130">
    <property type="entry name" value="YbeY"/>
    <property type="match status" value="1"/>
</dbReference>
<dbReference type="SUPFAM" id="SSF55486">
    <property type="entry name" value="Metalloproteases ('zincins'), catalytic domain"/>
    <property type="match status" value="1"/>
</dbReference>
<dbReference type="PROSITE" id="PS01306">
    <property type="entry name" value="UPF0054"/>
    <property type="match status" value="1"/>
</dbReference>
<comment type="function">
    <text evidence="1">Single strand-specific metallo-endoribonuclease involved in late-stage 70S ribosome quality control and in maturation of the 3' terminus of the 16S rRNA.</text>
</comment>
<comment type="cofactor">
    <cofactor evidence="1">
        <name>Zn(2+)</name>
        <dbReference type="ChEBI" id="CHEBI:29105"/>
    </cofactor>
    <text evidence="1">Binds 1 zinc ion.</text>
</comment>
<comment type="subcellular location">
    <subcellularLocation>
        <location evidence="1">Cytoplasm</location>
    </subcellularLocation>
</comment>
<comment type="similarity">
    <text evidence="1">Belongs to the endoribonuclease YbeY family.</text>
</comment>
<organism>
    <name type="scientific">Solibacter usitatus (strain Ellin6076)</name>
    <dbReference type="NCBI Taxonomy" id="234267"/>
    <lineage>
        <taxon>Bacteria</taxon>
        <taxon>Pseudomonadati</taxon>
        <taxon>Acidobacteriota</taxon>
        <taxon>Terriglobia</taxon>
        <taxon>Bryobacterales</taxon>
        <taxon>Solibacteraceae</taxon>
        <taxon>Candidatus Solibacter</taxon>
    </lineage>
</organism>
<reference key="1">
    <citation type="journal article" date="2009" name="Appl. Environ. Microbiol.">
        <title>Three genomes from the phylum Acidobacteria provide insight into the lifestyles of these microorganisms in soils.</title>
        <authorList>
            <person name="Ward N.L."/>
            <person name="Challacombe J.F."/>
            <person name="Janssen P.H."/>
            <person name="Henrissat B."/>
            <person name="Coutinho P.M."/>
            <person name="Wu M."/>
            <person name="Xie G."/>
            <person name="Haft D.H."/>
            <person name="Sait M."/>
            <person name="Badger J."/>
            <person name="Barabote R.D."/>
            <person name="Bradley B."/>
            <person name="Brettin T.S."/>
            <person name="Brinkac L.M."/>
            <person name="Bruce D."/>
            <person name="Creasy T."/>
            <person name="Daugherty S.C."/>
            <person name="Davidsen T.M."/>
            <person name="DeBoy R.T."/>
            <person name="Detter J.C."/>
            <person name="Dodson R.J."/>
            <person name="Durkin A.S."/>
            <person name="Ganapathy A."/>
            <person name="Gwinn-Giglio M."/>
            <person name="Han C.S."/>
            <person name="Khouri H."/>
            <person name="Kiss H."/>
            <person name="Kothari S.P."/>
            <person name="Madupu R."/>
            <person name="Nelson K.E."/>
            <person name="Nelson W.C."/>
            <person name="Paulsen I."/>
            <person name="Penn K."/>
            <person name="Ren Q."/>
            <person name="Rosovitz M.J."/>
            <person name="Selengut J.D."/>
            <person name="Shrivastava S."/>
            <person name="Sullivan S.A."/>
            <person name="Tapia R."/>
            <person name="Thompson L.S."/>
            <person name="Watkins K.L."/>
            <person name="Yang Q."/>
            <person name="Yu C."/>
            <person name="Zafar N."/>
            <person name="Zhou L."/>
            <person name="Kuske C.R."/>
        </authorList>
    </citation>
    <scope>NUCLEOTIDE SEQUENCE [LARGE SCALE GENOMIC DNA]</scope>
    <source>
        <strain>Ellin6076</strain>
    </source>
</reference>
<gene>
    <name evidence="1" type="primary">ybeY</name>
    <name type="ordered locus">Acid_7712</name>
</gene>
<evidence type="ECO:0000255" key="1">
    <source>
        <dbReference type="HAMAP-Rule" id="MF_00009"/>
    </source>
</evidence>
<protein>
    <recommendedName>
        <fullName evidence="1">Endoribonuclease YbeY</fullName>
        <ecNumber evidence="1">3.1.-.-</ecNumber>
    </recommendedName>
</protein>
<name>YBEY_SOLUE</name>
<proteinExistence type="inferred from homology"/>
<feature type="chain" id="PRO_0000284316" description="Endoribonuclease YbeY">
    <location>
        <begin position="1"/>
        <end position="147"/>
    </location>
</feature>
<feature type="binding site" evidence="1">
    <location>
        <position position="107"/>
    </location>
    <ligand>
        <name>Zn(2+)</name>
        <dbReference type="ChEBI" id="CHEBI:29105"/>
        <note>catalytic</note>
    </ligand>
</feature>
<feature type="binding site" evidence="1">
    <location>
        <position position="111"/>
    </location>
    <ligand>
        <name>Zn(2+)</name>
        <dbReference type="ChEBI" id="CHEBI:29105"/>
        <note>catalytic</note>
    </ligand>
</feature>
<feature type="binding site" evidence="1">
    <location>
        <position position="117"/>
    </location>
    <ligand>
        <name>Zn(2+)</name>
        <dbReference type="ChEBI" id="CHEBI:29105"/>
        <note>catalytic</note>
    </ligand>
</feature>
<keyword id="KW-0963">Cytoplasm</keyword>
<keyword id="KW-0255">Endonuclease</keyword>
<keyword id="KW-0378">Hydrolase</keyword>
<keyword id="KW-0479">Metal-binding</keyword>
<keyword id="KW-0540">Nuclease</keyword>
<keyword id="KW-0690">Ribosome biogenesis</keyword>
<keyword id="KW-0698">rRNA processing</keyword>
<keyword id="KW-0862">Zinc</keyword>